<gene>
    <name evidence="1" type="primary">matK</name>
</gene>
<geneLocation type="chloroplast"/>
<reference key="1">
    <citation type="journal article" date="2001" name="Plant Biol.">
        <title>Molecular phylogeny of Nepenthaceae based on cladistic analysis of plastid trnK intron sequence data.</title>
        <authorList>
            <person name="Meimberg H."/>
            <person name="Dittrich P."/>
            <person name="Heubl G."/>
        </authorList>
    </citation>
    <scope>NUCLEOTIDE SEQUENCE [GENOMIC DNA]</scope>
</reference>
<keyword id="KW-0150">Chloroplast</keyword>
<keyword id="KW-0507">mRNA processing</keyword>
<keyword id="KW-0934">Plastid</keyword>
<keyword id="KW-0694">RNA-binding</keyword>
<keyword id="KW-0819">tRNA processing</keyword>
<sequence length="504" mass="60687">MEELRGYLELDRSWQRDFLYTLILQEYIYSLAHDHGFNRTIFLENAGYEKKYSFLIVKRLITRMYQQNHLILSANDSNQNEFLGQKKNLYSQMISEGFAFIVEIPFSLQLLFSLEGKEIXXXXXXRSIHSIFPFLEDKFSHLNYVLDILIPHPVHLEILVQTIRYWTKDASSLHLLRFFLYEYRNWNSRISIKQYISFFSNRNQRLFLFLYNSHVCEYESIFIFLRNQPFHLRSTFSGAFLERILFYEKMEHLVKVFTKNFQVILWFFKDTFIHYVRYQGKSFVASKGTSLLMIKWKYYLVNFWQCYFSVWSQPRRIYINQLSNHSLDFMXFLSSVRLNPSVVRIQMFEKSFIIDNAINTFDTLVPNIHMSGSFAKEKFCNIFGHPISKPVWADLSDSDIIDRFGRICRSLSHYYSGSSRKKSLYRIKYILRLSCARTLARKHKSTVRTFLKRLGSEFLEEFFMEEEKVLSLILPRDSYTSQRFYRGRIWYLDIFCIHDLANHE</sequence>
<feature type="chain" id="PRO_0000143531" description="Maturase K">
    <location>
        <begin position="1"/>
        <end position="504"/>
    </location>
</feature>
<accession>Q95GT2</accession>
<comment type="function">
    <text evidence="1">Usually encoded in the trnK tRNA gene intron. Probably assists in splicing its own and other chloroplast group II introns.</text>
</comment>
<comment type="subcellular location">
    <subcellularLocation>
        <location>Plastid</location>
        <location>Chloroplast</location>
    </subcellularLocation>
</comment>
<comment type="similarity">
    <text evidence="1">Belongs to the intron maturase 2 family. MatK subfamily.</text>
</comment>
<name>MATK_NEPAL</name>
<organism>
    <name type="scientific">Nepenthes alata</name>
    <name type="common">Winged pitcher plant</name>
    <name type="synonym">Nepenthes copelandii</name>
    <dbReference type="NCBI Taxonomy" id="4376"/>
    <lineage>
        <taxon>Eukaryota</taxon>
        <taxon>Viridiplantae</taxon>
        <taxon>Streptophyta</taxon>
        <taxon>Embryophyta</taxon>
        <taxon>Tracheophyta</taxon>
        <taxon>Spermatophyta</taxon>
        <taxon>Magnoliopsida</taxon>
        <taxon>eudicotyledons</taxon>
        <taxon>Gunneridae</taxon>
        <taxon>Pentapetalae</taxon>
        <taxon>Caryophyllales</taxon>
        <taxon>Nepenthaceae</taxon>
        <taxon>Nepenthes</taxon>
    </lineage>
</organism>
<dbReference type="EMBL" id="AF315891">
    <property type="protein sequence ID" value="AAK56022.1"/>
    <property type="molecule type" value="Genomic_DNA"/>
</dbReference>
<dbReference type="GO" id="GO:0009507">
    <property type="term" value="C:chloroplast"/>
    <property type="evidence" value="ECO:0007669"/>
    <property type="project" value="UniProtKB-SubCell"/>
</dbReference>
<dbReference type="GO" id="GO:0003723">
    <property type="term" value="F:RNA binding"/>
    <property type="evidence" value="ECO:0007669"/>
    <property type="project" value="UniProtKB-KW"/>
</dbReference>
<dbReference type="GO" id="GO:0006397">
    <property type="term" value="P:mRNA processing"/>
    <property type="evidence" value="ECO:0007669"/>
    <property type="project" value="UniProtKB-KW"/>
</dbReference>
<dbReference type="GO" id="GO:0008380">
    <property type="term" value="P:RNA splicing"/>
    <property type="evidence" value="ECO:0007669"/>
    <property type="project" value="UniProtKB-UniRule"/>
</dbReference>
<dbReference type="GO" id="GO:0008033">
    <property type="term" value="P:tRNA processing"/>
    <property type="evidence" value="ECO:0007669"/>
    <property type="project" value="UniProtKB-KW"/>
</dbReference>
<dbReference type="HAMAP" id="MF_01390">
    <property type="entry name" value="MatK"/>
    <property type="match status" value="1"/>
</dbReference>
<dbReference type="InterPro" id="IPR024937">
    <property type="entry name" value="Domain_X"/>
</dbReference>
<dbReference type="InterPro" id="IPR002866">
    <property type="entry name" value="Maturase_MatK"/>
</dbReference>
<dbReference type="InterPro" id="IPR024942">
    <property type="entry name" value="Maturase_MatK_N"/>
</dbReference>
<dbReference type="PANTHER" id="PTHR34811">
    <property type="entry name" value="MATURASE K"/>
    <property type="match status" value="1"/>
</dbReference>
<dbReference type="PANTHER" id="PTHR34811:SF1">
    <property type="entry name" value="MATURASE K"/>
    <property type="match status" value="1"/>
</dbReference>
<dbReference type="Pfam" id="PF01348">
    <property type="entry name" value="Intron_maturas2"/>
    <property type="match status" value="1"/>
</dbReference>
<dbReference type="Pfam" id="PF01824">
    <property type="entry name" value="MatK_N"/>
    <property type="match status" value="1"/>
</dbReference>
<evidence type="ECO:0000255" key="1">
    <source>
        <dbReference type="HAMAP-Rule" id="MF_01390"/>
    </source>
</evidence>
<protein>
    <recommendedName>
        <fullName evidence="1">Maturase K</fullName>
    </recommendedName>
    <alternativeName>
        <fullName evidence="1">Intron maturase</fullName>
    </alternativeName>
</protein>
<proteinExistence type="inferred from homology"/>